<protein>
    <recommendedName>
        <fullName evidence="1">Dihydroxy-acid dehydratase</fullName>
        <shortName evidence="1">DAD</shortName>
        <ecNumber evidence="1">4.2.1.9</ecNumber>
    </recommendedName>
</protein>
<reference key="1">
    <citation type="journal article" date="2008" name="DNA Res.">
        <title>Complete genome sequence and comparative analysis of the wild-type commensal Escherichia coli strain SE11 isolated from a healthy adult.</title>
        <authorList>
            <person name="Oshima K."/>
            <person name="Toh H."/>
            <person name="Ogura Y."/>
            <person name="Sasamoto H."/>
            <person name="Morita H."/>
            <person name="Park S.-H."/>
            <person name="Ooka T."/>
            <person name="Iyoda S."/>
            <person name="Taylor T.D."/>
            <person name="Hayashi T."/>
            <person name="Itoh K."/>
            <person name="Hattori M."/>
        </authorList>
    </citation>
    <scope>NUCLEOTIDE SEQUENCE [LARGE SCALE GENOMIC DNA]</scope>
    <source>
        <strain>SE11</strain>
    </source>
</reference>
<sequence>MPKYRSATTTHGRNMAGARALWRATGMTDADFGKPIIAVVNSFTQFVPGHVHLRDLGKLVAEQIEAAGGVAKEFNTIAVDDGIAMGHGGMLYSLPSRELIADSVEYMVNAHCADAMVCISNCDKITPGMLMASLRLNIPVIFVSGGPMEAGKTKLSDQIIKLDLVDAMIQGADPKVSDSQSDQVERSACPTCGSCSGMFTANSMNCLTEALGLSQPGNGSLLATHADRKQLFLNAGKRIVELTKRYYEQNDESALPRNIASKAAFENAMTLDIAMGGSTNTVLHLLAAAQEAEIDFTMSDIDKLSRKVPQLCKVAPSTQKYHMEDVHRAGGVIGILGELDRAGLLNRDVKNVLGLTLPQTLEQYDVMLTQDDAVKNMFRAGPAGIRTTQAFSQDCRWDSLDDDRANGCIRSLEHAYSKDGGLAVLYGNFAENGCIVKTAGVDDSILKFTGPAKVYESQDDAVEAILGGKVVAGDVVVIRYEGPKGGPGMQEMLYPTSFLKSMGLGKACALITDGRFSGGTSGLSIGHVSPEAASGGSIGLIEDGDLIAIDIPNRGIQLQVSDAELAARREAQEARGDKAWTPKNRERQVSFALRAYASLATSADKGAVRDKSKLGG</sequence>
<keyword id="KW-0001">2Fe-2S</keyword>
<keyword id="KW-0028">Amino-acid biosynthesis</keyword>
<keyword id="KW-0100">Branched-chain amino acid biosynthesis</keyword>
<keyword id="KW-0408">Iron</keyword>
<keyword id="KW-0411">Iron-sulfur</keyword>
<keyword id="KW-0456">Lyase</keyword>
<keyword id="KW-0460">Magnesium</keyword>
<keyword id="KW-0479">Metal-binding</keyword>
<proteinExistence type="inferred from homology"/>
<gene>
    <name evidence="1" type="primary">ilvD</name>
    <name type="ordered locus">ECSE_4054</name>
</gene>
<name>ILVD_ECOSE</name>
<organism>
    <name type="scientific">Escherichia coli (strain SE11)</name>
    <dbReference type="NCBI Taxonomy" id="409438"/>
    <lineage>
        <taxon>Bacteria</taxon>
        <taxon>Pseudomonadati</taxon>
        <taxon>Pseudomonadota</taxon>
        <taxon>Gammaproteobacteria</taxon>
        <taxon>Enterobacterales</taxon>
        <taxon>Enterobacteriaceae</taxon>
        <taxon>Escherichia</taxon>
    </lineage>
</organism>
<comment type="function">
    <text evidence="1">Functions in the biosynthesis of branched-chain amino acids. Catalyzes the dehydration of (2R,3R)-2,3-dihydroxy-3-methylpentanoate (2,3-dihydroxy-3-methylvalerate) into 2-oxo-3-methylpentanoate (2-oxo-3-methylvalerate) and of (2R)-2,3-dihydroxy-3-methylbutanoate (2,3-dihydroxyisovalerate) into 2-oxo-3-methylbutanoate (2-oxoisovalerate), the penultimate precursor to L-isoleucine and L-valine, respectively.</text>
</comment>
<comment type="catalytic activity">
    <reaction evidence="1">
        <text>(2R)-2,3-dihydroxy-3-methylbutanoate = 3-methyl-2-oxobutanoate + H2O</text>
        <dbReference type="Rhea" id="RHEA:24809"/>
        <dbReference type="ChEBI" id="CHEBI:11851"/>
        <dbReference type="ChEBI" id="CHEBI:15377"/>
        <dbReference type="ChEBI" id="CHEBI:49072"/>
        <dbReference type="EC" id="4.2.1.9"/>
    </reaction>
    <physiologicalReaction direction="left-to-right" evidence="1">
        <dbReference type="Rhea" id="RHEA:24810"/>
    </physiologicalReaction>
</comment>
<comment type="catalytic activity">
    <reaction evidence="1">
        <text>(2R,3R)-2,3-dihydroxy-3-methylpentanoate = (S)-3-methyl-2-oxopentanoate + H2O</text>
        <dbReference type="Rhea" id="RHEA:27694"/>
        <dbReference type="ChEBI" id="CHEBI:15377"/>
        <dbReference type="ChEBI" id="CHEBI:35146"/>
        <dbReference type="ChEBI" id="CHEBI:49258"/>
        <dbReference type="EC" id="4.2.1.9"/>
    </reaction>
    <physiologicalReaction direction="left-to-right" evidence="1">
        <dbReference type="Rhea" id="RHEA:27695"/>
    </physiologicalReaction>
</comment>
<comment type="cofactor">
    <cofactor evidence="1">
        <name>[2Fe-2S] cluster</name>
        <dbReference type="ChEBI" id="CHEBI:190135"/>
    </cofactor>
    <text evidence="1">Binds 1 [2Fe-2S] cluster per subunit. This cluster acts as a Lewis acid cofactor.</text>
</comment>
<comment type="cofactor">
    <cofactor evidence="1">
        <name>Mg(2+)</name>
        <dbReference type="ChEBI" id="CHEBI:18420"/>
    </cofactor>
</comment>
<comment type="pathway">
    <text evidence="1">Amino-acid biosynthesis; L-isoleucine biosynthesis; L-isoleucine from 2-oxobutanoate: step 3/4.</text>
</comment>
<comment type="pathway">
    <text evidence="1">Amino-acid biosynthesis; L-valine biosynthesis; L-valine from pyruvate: step 3/4.</text>
</comment>
<comment type="subunit">
    <text evidence="1">Homodimer.</text>
</comment>
<comment type="similarity">
    <text evidence="1">Belongs to the IlvD/Edd family.</text>
</comment>
<feature type="chain" id="PRO_1000089382" description="Dihydroxy-acid dehydratase">
    <location>
        <begin position="1"/>
        <end position="616"/>
    </location>
</feature>
<feature type="active site" description="Proton acceptor" evidence="1">
    <location>
        <position position="517"/>
    </location>
</feature>
<feature type="binding site" evidence="1">
    <location>
        <position position="81"/>
    </location>
    <ligand>
        <name>Mg(2+)</name>
        <dbReference type="ChEBI" id="CHEBI:18420"/>
    </ligand>
</feature>
<feature type="binding site" evidence="1">
    <location>
        <position position="122"/>
    </location>
    <ligand>
        <name>[2Fe-2S] cluster</name>
        <dbReference type="ChEBI" id="CHEBI:190135"/>
    </ligand>
</feature>
<feature type="binding site" evidence="1">
    <location>
        <position position="123"/>
    </location>
    <ligand>
        <name>Mg(2+)</name>
        <dbReference type="ChEBI" id="CHEBI:18420"/>
    </ligand>
</feature>
<feature type="binding site" description="via carbamate group" evidence="1">
    <location>
        <position position="124"/>
    </location>
    <ligand>
        <name>Mg(2+)</name>
        <dbReference type="ChEBI" id="CHEBI:18420"/>
    </ligand>
</feature>
<feature type="binding site" evidence="1">
    <location>
        <position position="195"/>
    </location>
    <ligand>
        <name>[2Fe-2S] cluster</name>
        <dbReference type="ChEBI" id="CHEBI:190135"/>
    </ligand>
</feature>
<feature type="binding site" evidence="1">
    <location>
        <position position="491"/>
    </location>
    <ligand>
        <name>Mg(2+)</name>
        <dbReference type="ChEBI" id="CHEBI:18420"/>
    </ligand>
</feature>
<feature type="modified residue" description="N6-carboxylysine" evidence="1">
    <location>
        <position position="124"/>
    </location>
</feature>
<dbReference type="EC" id="4.2.1.9" evidence="1"/>
<dbReference type="EMBL" id="AP009240">
    <property type="protein sequence ID" value="BAG79578.1"/>
    <property type="molecule type" value="Genomic_DNA"/>
</dbReference>
<dbReference type="RefSeq" id="WP_001127394.1">
    <property type="nucleotide sequence ID" value="NC_011415.1"/>
</dbReference>
<dbReference type="SMR" id="B6I4A8"/>
<dbReference type="GeneID" id="75204762"/>
<dbReference type="KEGG" id="ecy:ECSE_4054"/>
<dbReference type="HOGENOM" id="CLU_014271_4_2_6"/>
<dbReference type="UniPathway" id="UPA00047">
    <property type="reaction ID" value="UER00057"/>
</dbReference>
<dbReference type="UniPathway" id="UPA00049">
    <property type="reaction ID" value="UER00061"/>
</dbReference>
<dbReference type="Proteomes" id="UP000008199">
    <property type="component" value="Chromosome"/>
</dbReference>
<dbReference type="GO" id="GO:0005829">
    <property type="term" value="C:cytosol"/>
    <property type="evidence" value="ECO:0007669"/>
    <property type="project" value="TreeGrafter"/>
</dbReference>
<dbReference type="GO" id="GO:0051537">
    <property type="term" value="F:2 iron, 2 sulfur cluster binding"/>
    <property type="evidence" value="ECO:0007669"/>
    <property type="project" value="UniProtKB-UniRule"/>
</dbReference>
<dbReference type="GO" id="GO:0004160">
    <property type="term" value="F:dihydroxy-acid dehydratase activity"/>
    <property type="evidence" value="ECO:0007669"/>
    <property type="project" value="UniProtKB-UniRule"/>
</dbReference>
<dbReference type="GO" id="GO:0000287">
    <property type="term" value="F:magnesium ion binding"/>
    <property type="evidence" value="ECO:0007669"/>
    <property type="project" value="UniProtKB-UniRule"/>
</dbReference>
<dbReference type="GO" id="GO:0009097">
    <property type="term" value="P:isoleucine biosynthetic process"/>
    <property type="evidence" value="ECO:0007669"/>
    <property type="project" value="UniProtKB-UniRule"/>
</dbReference>
<dbReference type="GO" id="GO:0009099">
    <property type="term" value="P:L-valine biosynthetic process"/>
    <property type="evidence" value="ECO:0007669"/>
    <property type="project" value="UniProtKB-UniRule"/>
</dbReference>
<dbReference type="FunFam" id="3.50.30.80:FF:000001">
    <property type="entry name" value="Dihydroxy-acid dehydratase"/>
    <property type="match status" value="1"/>
</dbReference>
<dbReference type="Gene3D" id="3.50.30.80">
    <property type="entry name" value="IlvD/EDD C-terminal domain-like"/>
    <property type="match status" value="1"/>
</dbReference>
<dbReference type="HAMAP" id="MF_00012">
    <property type="entry name" value="IlvD"/>
    <property type="match status" value="1"/>
</dbReference>
<dbReference type="InterPro" id="IPR042096">
    <property type="entry name" value="Dihydro-acid_dehy_C"/>
</dbReference>
<dbReference type="InterPro" id="IPR004404">
    <property type="entry name" value="DihydroxyA_deHydtase"/>
</dbReference>
<dbReference type="InterPro" id="IPR020558">
    <property type="entry name" value="DiOHA_6PGluconate_deHydtase_CS"/>
</dbReference>
<dbReference type="InterPro" id="IPR056740">
    <property type="entry name" value="ILV_EDD_C"/>
</dbReference>
<dbReference type="InterPro" id="IPR000581">
    <property type="entry name" value="ILV_EDD_N"/>
</dbReference>
<dbReference type="InterPro" id="IPR037237">
    <property type="entry name" value="IlvD/EDD_N"/>
</dbReference>
<dbReference type="NCBIfam" id="TIGR00110">
    <property type="entry name" value="ilvD"/>
    <property type="match status" value="1"/>
</dbReference>
<dbReference type="NCBIfam" id="NF009103">
    <property type="entry name" value="PRK12448.1"/>
    <property type="match status" value="1"/>
</dbReference>
<dbReference type="PANTHER" id="PTHR43661">
    <property type="entry name" value="D-XYLONATE DEHYDRATASE"/>
    <property type="match status" value="1"/>
</dbReference>
<dbReference type="PANTHER" id="PTHR43661:SF3">
    <property type="entry name" value="D-XYLONATE DEHYDRATASE YAGF-RELATED"/>
    <property type="match status" value="1"/>
</dbReference>
<dbReference type="Pfam" id="PF24877">
    <property type="entry name" value="ILV_EDD_C"/>
    <property type="match status" value="1"/>
</dbReference>
<dbReference type="Pfam" id="PF00920">
    <property type="entry name" value="ILVD_EDD_N"/>
    <property type="match status" value="1"/>
</dbReference>
<dbReference type="SUPFAM" id="SSF143975">
    <property type="entry name" value="IlvD/EDD N-terminal domain-like"/>
    <property type="match status" value="1"/>
</dbReference>
<dbReference type="SUPFAM" id="SSF52016">
    <property type="entry name" value="LeuD/IlvD-like"/>
    <property type="match status" value="1"/>
</dbReference>
<dbReference type="PROSITE" id="PS00886">
    <property type="entry name" value="ILVD_EDD_1"/>
    <property type="match status" value="1"/>
</dbReference>
<dbReference type="PROSITE" id="PS00887">
    <property type="entry name" value="ILVD_EDD_2"/>
    <property type="match status" value="1"/>
</dbReference>
<evidence type="ECO:0000255" key="1">
    <source>
        <dbReference type="HAMAP-Rule" id="MF_00012"/>
    </source>
</evidence>
<accession>B6I4A8</accession>